<comment type="function">
    <text evidence="1">Forms part of the ribosomal stalk, playing a central role in the interaction of the ribosome with GTP-bound translation factors.</text>
</comment>
<comment type="subunit">
    <text evidence="1">Part of the ribosomal stalk of the 50S ribosomal subunit. The N-terminus interacts with L11 and the large rRNA to form the base of the stalk. The C-terminus forms an elongated spine to which L12 dimers bind in a sequential fashion forming a multimeric L10(L12)X complex.</text>
</comment>
<comment type="similarity">
    <text evidence="1">Belongs to the universal ribosomal protein uL10 family.</text>
</comment>
<dbReference type="EMBL" id="CP000569">
    <property type="protein sequence ID" value="ABN74804.1"/>
    <property type="molecule type" value="Genomic_DNA"/>
</dbReference>
<dbReference type="RefSeq" id="WP_005619364.1">
    <property type="nucleotide sequence ID" value="NC_009053.1"/>
</dbReference>
<dbReference type="SMR" id="A3N318"/>
<dbReference type="STRING" id="416269.APL_1720"/>
<dbReference type="EnsemblBacteria" id="ABN74804">
    <property type="protein sequence ID" value="ABN74804"/>
    <property type="gene ID" value="APL_1720"/>
</dbReference>
<dbReference type="GeneID" id="48600008"/>
<dbReference type="KEGG" id="apl:APL_1720"/>
<dbReference type="eggNOG" id="COG0244">
    <property type="taxonomic scope" value="Bacteria"/>
</dbReference>
<dbReference type="HOGENOM" id="CLU_092227_0_2_6"/>
<dbReference type="Proteomes" id="UP000001432">
    <property type="component" value="Chromosome"/>
</dbReference>
<dbReference type="GO" id="GO:0015934">
    <property type="term" value="C:large ribosomal subunit"/>
    <property type="evidence" value="ECO:0007669"/>
    <property type="project" value="InterPro"/>
</dbReference>
<dbReference type="GO" id="GO:0070180">
    <property type="term" value="F:large ribosomal subunit rRNA binding"/>
    <property type="evidence" value="ECO:0007669"/>
    <property type="project" value="UniProtKB-UniRule"/>
</dbReference>
<dbReference type="GO" id="GO:0003735">
    <property type="term" value="F:structural constituent of ribosome"/>
    <property type="evidence" value="ECO:0007669"/>
    <property type="project" value="InterPro"/>
</dbReference>
<dbReference type="GO" id="GO:0006412">
    <property type="term" value="P:translation"/>
    <property type="evidence" value="ECO:0007669"/>
    <property type="project" value="UniProtKB-UniRule"/>
</dbReference>
<dbReference type="CDD" id="cd05797">
    <property type="entry name" value="Ribosomal_L10"/>
    <property type="match status" value="1"/>
</dbReference>
<dbReference type="FunFam" id="3.30.70.1730:FF:000001">
    <property type="entry name" value="50S ribosomal protein L10"/>
    <property type="match status" value="1"/>
</dbReference>
<dbReference type="Gene3D" id="3.30.70.1730">
    <property type="match status" value="1"/>
</dbReference>
<dbReference type="Gene3D" id="6.10.250.2350">
    <property type="match status" value="1"/>
</dbReference>
<dbReference type="HAMAP" id="MF_00362">
    <property type="entry name" value="Ribosomal_uL10"/>
    <property type="match status" value="1"/>
</dbReference>
<dbReference type="InterPro" id="IPR001790">
    <property type="entry name" value="Ribosomal_uL10"/>
</dbReference>
<dbReference type="InterPro" id="IPR043141">
    <property type="entry name" value="Ribosomal_uL10-like_sf"/>
</dbReference>
<dbReference type="InterPro" id="IPR022973">
    <property type="entry name" value="Ribosomal_uL10_bac"/>
</dbReference>
<dbReference type="InterPro" id="IPR047865">
    <property type="entry name" value="Ribosomal_uL10_bac_type"/>
</dbReference>
<dbReference type="InterPro" id="IPR002363">
    <property type="entry name" value="Ribosomal_uL10_CS_bac"/>
</dbReference>
<dbReference type="NCBIfam" id="NF000955">
    <property type="entry name" value="PRK00099.1-1"/>
    <property type="match status" value="1"/>
</dbReference>
<dbReference type="PANTHER" id="PTHR11560">
    <property type="entry name" value="39S RIBOSOMAL PROTEIN L10, MITOCHONDRIAL"/>
    <property type="match status" value="1"/>
</dbReference>
<dbReference type="Pfam" id="PF00466">
    <property type="entry name" value="Ribosomal_L10"/>
    <property type="match status" value="1"/>
</dbReference>
<dbReference type="SUPFAM" id="SSF160369">
    <property type="entry name" value="Ribosomal protein L10-like"/>
    <property type="match status" value="1"/>
</dbReference>
<dbReference type="PROSITE" id="PS01109">
    <property type="entry name" value="RIBOSOMAL_L10"/>
    <property type="match status" value="1"/>
</dbReference>
<sequence length="163" mass="17627">MALNLQDKQAIVAEVNEAAKGALSAVVADSRGVTVEKMTELRKSAREAGVTMRVVRNTLLRRAVEGTEFECLTDTFTGPTLIAFSHEHPGAAARLFTEFAKANKEFELKGAAFEGKVQDVEFLATLPTYEEAIARLMGTMKEAAAGKLVRTLAALRDKLQEAA</sequence>
<gene>
    <name evidence="1" type="primary">rplJ</name>
    <name type="ordered locus">APL_1720</name>
</gene>
<proteinExistence type="inferred from homology"/>
<reference key="1">
    <citation type="journal article" date="2008" name="J. Bacteriol.">
        <title>The complete genome sequence of Actinobacillus pleuropneumoniae L20 (serotype 5b).</title>
        <authorList>
            <person name="Foote S.J."/>
            <person name="Bosse J.T."/>
            <person name="Bouevitch A.B."/>
            <person name="Langford P.R."/>
            <person name="Young N.M."/>
            <person name="Nash J.H.E."/>
        </authorList>
    </citation>
    <scope>NUCLEOTIDE SEQUENCE [LARGE SCALE GENOMIC DNA]</scope>
    <source>
        <strain>L20</strain>
    </source>
</reference>
<keyword id="KW-1185">Reference proteome</keyword>
<keyword id="KW-0687">Ribonucleoprotein</keyword>
<keyword id="KW-0689">Ribosomal protein</keyword>
<keyword id="KW-0694">RNA-binding</keyword>
<keyword id="KW-0699">rRNA-binding</keyword>
<accession>A3N318</accession>
<organism>
    <name type="scientific">Actinobacillus pleuropneumoniae serotype 5b (strain L20)</name>
    <dbReference type="NCBI Taxonomy" id="416269"/>
    <lineage>
        <taxon>Bacteria</taxon>
        <taxon>Pseudomonadati</taxon>
        <taxon>Pseudomonadota</taxon>
        <taxon>Gammaproteobacteria</taxon>
        <taxon>Pasteurellales</taxon>
        <taxon>Pasteurellaceae</taxon>
        <taxon>Actinobacillus</taxon>
    </lineage>
</organism>
<feature type="chain" id="PRO_1000005459" description="Large ribosomal subunit protein uL10">
    <location>
        <begin position="1"/>
        <end position="163"/>
    </location>
</feature>
<evidence type="ECO:0000255" key="1">
    <source>
        <dbReference type="HAMAP-Rule" id="MF_00362"/>
    </source>
</evidence>
<evidence type="ECO:0000305" key="2"/>
<protein>
    <recommendedName>
        <fullName evidence="1">Large ribosomal subunit protein uL10</fullName>
    </recommendedName>
    <alternativeName>
        <fullName evidence="2">50S ribosomal protein L10</fullName>
    </alternativeName>
</protein>
<name>RL10_ACTP2</name>